<reference key="1">
    <citation type="submission" date="2007-02" db="EMBL/GenBank/DDBJ databases">
        <title>Complete sequence of Mycobacterium sp. JLS.</title>
        <authorList>
            <consortium name="US DOE Joint Genome Institute"/>
            <person name="Copeland A."/>
            <person name="Lucas S."/>
            <person name="Lapidus A."/>
            <person name="Barry K."/>
            <person name="Detter J.C."/>
            <person name="Glavina del Rio T."/>
            <person name="Hammon N."/>
            <person name="Israni S."/>
            <person name="Dalin E."/>
            <person name="Tice H."/>
            <person name="Pitluck S."/>
            <person name="Chain P."/>
            <person name="Malfatti S."/>
            <person name="Shin M."/>
            <person name="Vergez L."/>
            <person name="Schmutz J."/>
            <person name="Larimer F."/>
            <person name="Land M."/>
            <person name="Hauser L."/>
            <person name="Kyrpides N."/>
            <person name="Mikhailova N."/>
            <person name="Miller C.D."/>
            <person name="Anderson A.J."/>
            <person name="Sims R.C."/>
            <person name="Richardson P."/>
        </authorList>
    </citation>
    <scope>NUCLEOTIDE SEQUENCE [LARGE SCALE GENOMIC DNA]</scope>
    <source>
        <strain>JLS</strain>
    </source>
</reference>
<name>RS12_MYCSJ</name>
<keyword id="KW-0488">Methylation</keyword>
<keyword id="KW-0687">Ribonucleoprotein</keyword>
<keyword id="KW-0689">Ribosomal protein</keyword>
<keyword id="KW-0694">RNA-binding</keyword>
<keyword id="KW-0699">rRNA-binding</keyword>
<keyword id="KW-0820">tRNA-binding</keyword>
<proteinExistence type="inferred from homology"/>
<evidence type="ECO:0000250" key="1"/>
<evidence type="ECO:0000255" key="2">
    <source>
        <dbReference type="HAMAP-Rule" id="MF_00403"/>
    </source>
</evidence>
<evidence type="ECO:0000256" key="3">
    <source>
        <dbReference type="SAM" id="MobiDB-lite"/>
    </source>
</evidence>
<evidence type="ECO:0000305" key="4"/>
<protein>
    <recommendedName>
        <fullName evidence="2">Small ribosomal subunit protein uS12</fullName>
    </recommendedName>
    <alternativeName>
        <fullName evidence="4">30S ribosomal protein S12</fullName>
    </alternativeName>
</protein>
<accession>A3PV93</accession>
<feature type="chain" id="PRO_0000296001" description="Small ribosomal subunit protein uS12">
    <location>
        <begin position="1"/>
        <end position="124"/>
    </location>
</feature>
<feature type="region of interest" description="Disordered" evidence="3">
    <location>
        <begin position="105"/>
        <end position="124"/>
    </location>
</feature>
<feature type="compositionally biased region" description="Basic residues" evidence="3">
    <location>
        <begin position="108"/>
        <end position="118"/>
    </location>
</feature>
<feature type="modified residue" description="3-methylthioaspartic acid" evidence="1">
    <location>
        <position position="89"/>
    </location>
</feature>
<sequence length="124" mass="13849">MPTINQLVRKGRRDKIAKVKTAALKGSPQRRGVCTRVYTTTPKKPNSALRKVARVKLTSQVEVTAYIPGEGHNLQEHSMVLVRGGRVKDLPGVRYKIIRGSLDTQGVKNRKQARSRYGAKKEKS</sequence>
<dbReference type="EMBL" id="CP000580">
    <property type="protein sequence ID" value="ABN96820.1"/>
    <property type="molecule type" value="Genomic_DNA"/>
</dbReference>
<dbReference type="SMR" id="A3PV93"/>
<dbReference type="KEGG" id="mjl:Mjls_1012"/>
<dbReference type="HOGENOM" id="CLU_104295_1_2_11"/>
<dbReference type="BioCyc" id="MSP164757:G1G8C-1024-MONOMER"/>
<dbReference type="GO" id="GO:0015935">
    <property type="term" value="C:small ribosomal subunit"/>
    <property type="evidence" value="ECO:0007669"/>
    <property type="project" value="InterPro"/>
</dbReference>
<dbReference type="GO" id="GO:0019843">
    <property type="term" value="F:rRNA binding"/>
    <property type="evidence" value="ECO:0007669"/>
    <property type="project" value="UniProtKB-UniRule"/>
</dbReference>
<dbReference type="GO" id="GO:0003735">
    <property type="term" value="F:structural constituent of ribosome"/>
    <property type="evidence" value="ECO:0007669"/>
    <property type="project" value="InterPro"/>
</dbReference>
<dbReference type="GO" id="GO:0000049">
    <property type="term" value="F:tRNA binding"/>
    <property type="evidence" value="ECO:0007669"/>
    <property type="project" value="UniProtKB-UniRule"/>
</dbReference>
<dbReference type="GO" id="GO:0006412">
    <property type="term" value="P:translation"/>
    <property type="evidence" value="ECO:0007669"/>
    <property type="project" value="UniProtKB-UniRule"/>
</dbReference>
<dbReference type="CDD" id="cd03368">
    <property type="entry name" value="Ribosomal_S12"/>
    <property type="match status" value="1"/>
</dbReference>
<dbReference type="FunFam" id="2.40.50.140:FF:000001">
    <property type="entry name" value="30S ribosomal protein S12"/>
    <property type="match status" value="1"/>
</dbReference>
<dbReference type="Gene3D" id="2.40.50.140">
    <property type="entry name" value="Nucleic acid-binding proteins"/>
    <property type="match status" value="1"/>
</dbReference>
<dbReference type="HAMAP" id="MF_00403_B">
    <property type="entry name" value="Ribosomal_uS12_B"/>
    <property type="match status" value="1"/>
</dbReference>
<dbReference type="InterPro" id="IPR012340">
    <property type="entry name" value="NA-bd_OB-fold"/>
</dbReference>
<dbReference type="InterPro" id="IPR006032">
    <property type="entry name" value="Ribosomal_uS12"/>
</dbReference>
<dbReference type="InterPro" id="IPR005679">
    <property type="entry name" value="Ribosomal_uS12_bac"/>
</dbReference>
<dbReference type="NCBIfam" id="TIGR00981">
    <property type="entry name" value="rpsL_bact"/>
    <property type="match status" value="1"/>
</dbReference>
<dbReference type="PANTHER" id="PTHR11652">
    <property type="entry name" value="30S RIBOSOMAL PROTEIN S12 FAMILY MEMBER"/>
    <property type="match status" value="1"/>
</dbReference>
<dbReference type="Pfam" id="PF00164">
    <property type="entry name" value="Ribosom_S12_S23"/>
    <property type="match status" value="1"/>
</dbReference>
<dbReference type="PIRSF" id="PIRSF002133">
    <property type="entry name" value="Ribosomal_S12/S23"/>
    <property type="match status" value="1"/>
</dbReference>
<dbReference type="PRINTS" id="PR01034">
    <property type="entry name" value="RIBOSOMALS12"/>
</dbReference>
<dbReference type="SUPFAM" id="SSF50249">
    <property type="entry name" value="Nucleic acid-binding proteins"/>
    <property type="match status" value="1"/>
</dbReference>
<dbReference type="PROSITE" id="PS00055">
    <property type="entry name" value="RIBOSOMAL_S12"/>
    <property type="match status" value="1"/>
</dbReference>
<comment type="function">
    <text evidence="2">With S4 and S5 plays an important role in translational accuracy.</text>
</comment>
<comment type="function">
    <text evidence="2">Interacts with and stabilizes bases of the 16S rRNA that are involved in tRNA selection in the A site and with the mRNA backbone. Located at the interface of the 30S and 50S subunits, it traverses the body of the 30S subunit contacting proteins on the other side and probably holding the rRNA structure together. The combined cluster of proteins S8, S12 and S17 appears to hold together the shoulder and platform of the 30S subunit.</text>
</comment>
<comment type="subunit">
    <text evidence="2">Part of the 30S ribosomal subunit. Contacts proteins S8 and S17. May interact with IF1 in the 30S initiation complex.</text>
</comment>
<comment type="similarity">
    <text evidence="2">Belongs to the universal ribosomal protein uS12 family.</text>
</comment>
<organism>
    <name type="scientific">Mycobacterium sp. (strain JLS)</name>
    <dbReference type="NCBI Taxonomy" id="164757"/>
    <lineage>
        <taxon>Bacteria</taxon>
        <taxon>Bacillati</taxon>
        <taxon>Actinomycetota</taxon>
        <taxon>Actinomycetes</taxon>
        <taxon>Mycobacteriales</taxon>
        <taxon>Mycobacteriaceae</taxon>
        <taxon>Mycobacterium</taxon>
    </lineage>
</organism>
<gene>
    <name evidence="2" type="primary">rpsL</name>
    <name type="ordered locus">Mjls_1012</name>
</gene>